<reference key="1">
    <citation type="journal article" date="2005" name="Science">
        <title>The transcriptional landscape of the mammalian genome.</title>
        <authorList>
            <person name="Carninci P."/>
            <person name="Kasukawa T."/>
            <person name="Katayama S."/>
            <person name="Gough J."/>
            <person name="Frith M.C."/>
            <person name="Maeda N."/>
            <person name="Oyama R."/>
            <person name="Ravasi T."/>
            <person name="Lenhard B."/>
            <person name="Wells C."/>
            <person name="Kodzius R."/>
            <person name="Shimokawa K."/>
            <person name="Bajic V.B."/>
            <person name="Brenner S.E."/>
            <person name="Batalov S."/>
            <person name="Forrest A.R."/>
            <person name="Zavolan M."/>
            <person name="Davis M.J."/>
            <person name="Wilming L.G."/>
            <person name="Aidinis V."/>
            <person name="Allen J.E."/>
            <person name="Ambesi-Impiombato A."/>
            <person name="Apweiler R."/>
            <person name="Aturaliya R.N."/>
            <person name="Bailey T.L."/>
            <person name="Bansal M."/>
            <person name="Baxter L."/>
            <person name="Beisel K.W."/>
            <person name="Bersano T."/>
            <person name="Bono H."/>
            <person name="Chalk A.M."/>
            <person name="Chiu K.P."/>
            <person name="Choudhary V."/>
            <person name="Christoffels A."/>
            <person name="Clutterbuck D.R."/>
            <person name="Crowe M.L."/>
            <person name="Dalla E."/>
            <person name="Dalrymple B.P."/>
            <person name="de Bono B."/>
            <person name="Della Gatta G."/>
            <person name="di Bernardo D."/>
            <person name="Down T."/>
            <person name="Engstrom P."/>
            <person name="Fagiolini M."/>
            <person name="Faulkner G."/>
            <person name="Fletcher C.F."/>
            <person name="Fukushima T."/>
            <person name="Furuno M."/>
            <person name="Futaki S."/>
            <person name="Gariboldi M."/>
            <person name="Georgii-Hemming P."/>
            <person name="Gingeras T.R."/>
            <person name="Gojobori T."/>
            <person name="Green R.E."/>
            <person name="Gustincich S."/>
            <person name="Harbers M."/>
            <person name="Hayashi Y."/>
            <person name="Hensch T.K."/>
            <person name="Hirokawa N."/>
            <person name="Hill D."/>
            <person name="Huminiecki L."/>
            <person name="Iacono M."/>
            <person name="Ikeo K."/>
            <person name="Iwama A."/>
            <person name="Ishikawa T."/>
            <person name="Jakt M."/>
            <person name="Kanapin A."/>
            <person name="Katoh M."/>
            <person name="Kawasawa Y."/>
            <person name="Kelso J."/>
            <person name="Kitamura H."/>
            <person name="Kitano H."/>
            <person name="Kollias G."/>
            <person name="Krishnan S.P."/>
            <person name="Kruger A."/>
            <person name="Kummerfeld S.K."/>
            <person name="Kurochkin I.V."/>
            <person name="Lareau L.F."/>
            <person name="Lazarevic D."/>
            <person name="Lipovich L."/>
            <person name="Liu J."/>
            <person name="Liuni S."/>
            <person name="McWilliam S."/>
            <person name="Madan Babu M."/>
            <person name="Madera M."/>
            <person name="Marchionni L."/>
            <person name="Matsuda H."/>
            <person name="Matsuzawa S."/>
            <person name="Miki H."/>
            <person name="Mignone F."/>
            <person name="Miyake S."/>
            <person name="Morris K."/>
            <person name="Mottagui-Tabar S."/>
            <person name="Mulder N."/>
            <person name="Nakano N."/>
            <person name="Nakauchi H."/>
            <person name="Ng P."/>
            <person name="Nilsson R."/>
            <person name="Nishiguchi S."/>
            <person name="Nishikawa S."/>
            <person name="Nori F."/>
            <person name="Ohara O."/>
            <person name="Okazaki Y."/>
            <person name="Orlando V."/>
            <person name="Pang K.C."/>
            <person name="Pavan W.J."/>
            <person name="Pavesi G."/>
            <person name="Pesole G."/>
            <person name="Petrovsky N."/>
            <person name="Piazza S."/>
            <person name="Reed J."/>
            <person name="Reid J.F."/>
            <person name="Ring B.Z."/>
            <person name="Ringwald M."/>
            <person name="Rost B."/>
            <person name="Ruan Y."/>
            <person name="Salzberg S.L."/>
            <person name="Sandelin A."/>
            <person name="Schneider C."/>
            <person name="Schoenbach C."/>
            <person name="Sekiguchi K."/>
            <person name="Semple C.A."/>
            <person name="Seno S."/>
            <person name="Sessa L."/>
            <person name="Sheng Y."/>
            <person name="Shibata Y."/>
            <person name="Shimada H."/>
            <person name="Shimada K."/>
            <person name="Silva D."/>
            <person name="Sinclair B."/>
            <person name="Sperling S."/>
            <person name="Stupka E."/>
            <person name="Sugiura K."/>
            <person name="Sultana R."/>
            <person name="Takenaka Y."/>
            <person name="Taki K."/>
            <person name="Tammoja K."/>
            <person name="Tan S.L."/>
            <person name="Tang S."/>
            <person name="Taylor M.S."/>
            <person name="Tegner J."/>
            <person name="Teichmann S.A."/>
            <person name="Ueda H.R."/>
            <person name="van Nimwegen E."/>
            <person name="Verardo R."/>
            <person name="Wei C.L."/>
            <person name="Yagi K."/>
            <person name="Yamanishi H."/>
            <person name="Zabarovsky E."/>
            <person name="Zhu S."/>
            <person name="Zimmer A."/>
            <person name="Hide W."/>
            <person name="Bult C."/>
            <person name="Grimmond S.M."/>
            <person name="Teasdale R.D."/>
            <person name="Liu E.T."/>
            <person name="Brusic V."/>
            <person name="Quackenbush J."/>
            <person name="Wahlestedt C."/>
            <person name="Mattick J.S."/>
            <person name="Hume D.A."/>
            <person name="Kai C."/>
            <person name="Sasaki D."/>
            <person name="Tomaru Y."/>
            <person name="Fukuda S."/>
            <person name="Kanamori-Katayama M."/>
            <person name="Suzuki M."/>
            <person name="Aoki J."/>
            <person name="Arakawa T."/>
            <person name="Iida J."/>
            <person name="Imamura K."/>
            <person name="Itoh M."/>
            <person name="Kato T."/>
            <person name="Kawaji H."/>
            <person name="Kawagashira N."/>
            <person name="Kawashima T."/>
            <person name="Kojima M."/>
            <person name="Kondo S."/>
            <person name="Konno H."/>
            <person name="Nakano K."/>
            <person name="Ninomiya N."/>
            <person name="Nishio T."/>
            <person name="Okada M."/>
            <person name="Plessy C."/>
            <person name="Shibata K."/>
            <person name="Shiraki T."/>
            <person name="Suzuki S."/>
            <person name="Tagami M."/>
            <person name="Waki K."/>
            <person name="Watahiki A."/>
            <person name="Okamura-Oho Y."/>
            <person name="Suzuki H."/>
            <person name="Kawai J."/>
            <person name="Hayashizaki Y."/>
        </authorList>
    </citation>
    <scope>NUCLEOTIDE SEQUENCE [LARGE SCALE MRNA]</scope>
    <source>
        <strain>C57BL/6J</strain>
        <tissue>Bone marrow</tissue>
        <tissue>Lung</tissue>
    </source>
</reference>
<reference key="2">
    <citation type="journal article" date="2010" name="Cell">
        <title>A tissue-specific atlas of mouse protein phosphorylation and expression.</title>
        <authorList>
            <person name="Huttlin E.L."/>
            <person name="Jedrychowski M.P."/>
            <person name="Elias J.E."/>
            <person name="Goswami T."/>
            <person name="Rad R."/>
            <person name="Beausoleil S.A."/>
            <person name="Villen J."/>
            <person name="Haas W."/>
            <person name="Sowa M.E."/>
            <person name="Gygi S.P."/>
        </authorList>
    </citation>
    <scope>IDENTIFICATION BY MASS SPECTROMETRY [LARGE SCALE ANALYSIS]</scope>
    <source>
        <tissue>Brown adipose tissue</tissue>
    </source>
</reference>
<sequence>MLFLRAAVLPGFWLPRVRRVQLVRSPAVTLPSPVRTVHAGSRVWGSAWAGGGPVRGGGEEDPREDEEEEEDELLRAPPLLPLDTQRVCVLHPDVKRPAGKKPRSTAEWQVAEAAALVRALPGWSVASTLVVPSAAPGSRLVFGKGNFQDVTEKIKGCQDITSVFLNVERMAPPTKKELESAWGLRVFDRFTLVLHIFRCNARTREARMQLALAEIPLLRSSVNTDSGQQDQQGWGSRYIMGSGESPTELRARALRDRELRLRRVLERLRDKRRLMRKERVRREFPVVSVVGYTNCGKTTLIQALTGEAALQPRDQPFATLDVTVHAGLLPSRLRILYVDTIGFLSQLPHNLIHAFSATLEDVAYSDVLVHVTDVSHPDAELQKATVLSTLRGLHLPPALLESALEVHSKVDLVPGYTPPCSGALAVSAISGRGLDELKAALEASVLRATGRQVLTLCVRLGGPQLGWLYKEAVVQQVQELPEGDAAHVTVVITQAAYGRFRKLFPIDAPSALPH</sequence>
<feature type="chain" id="PRO_0000304799" description="Putative GTP-binding protein 6">
    <location>
        <begin position="1"/>
        <end position="514"/>
    </location>
</feature>
<feature type="domain" description="Hflx-type G" evidence="1">
    <location>
        <begin position="285"/>
        <end position="449"/>
    </location>
</feature>
<feature type="region of interest" description="Disordered" evidence="2">
    <location>
        <begin position="48"/>
        <end position="71"/>
    </location>
</feature>
<feature type="compositionally biased region" description="Acidic residues" evidence="2">
    <location>
        <begin position="59"/>
        <end position="71"/>
    </location>
</feature>
<feature type="binding site" evidence="1">
    <location>
        <position position="298"/>
    </location>
    <ligand>
        <name>Mg(2+)</name>
        <dbReference type="ChEBI" id="CHEBI:18420"/>
    </ligand>
</feature>
<feature type="binding site" evidence="1">
    <location>
        <position position="319"/>
    </location>
    <ligand>
        <name>Mg(2+)</name>
        <dbReference type="ChEBI" id="CHEBI:18420"/>
    </ligand>
</feature>
<feature type="sequence conflict" description="In Ref. 1; BAE26076/BAE35103." evidence="3" ref="1">
    <original>N</original>
    <variation>S</variation>
    <location>
        <position position="350"/>
    </location>
</feature>
<feature type="sequence conflict" description="In Ref. 1; BAE35103." evidence="3" ref="1">
    <original>R</original>
    <variation>G</variation>
    <location>
        <position position="501"/>
    </location>
</feature>
<comment type="cofactor">
    <cofactor evidence="1">
        <name>Mg(2+)</name>
        <dbReference type="ChEBI" id="CHEBI:18420"/>
    </cofactor>
</comment>
<comment type="similarity">
    <text evidence="1">Belongs to the TRAFAC class OBG-HflX-like GTPase superfamily. HflX GTPase family.</text>
</comment>
<gene>
    <name type="primary">Gtpbp6</name>
</gene>
<dbReference type="EMBL" id="AK144812">
    <property type="protein sequence ID" value="BAE26076.1"/>
    <property type="molecule type" value="mRNA"/>
</dbReference>
<dbReference type="EMBL" id="AK152225">
    <property type="protein sequence ID" value="BAE31052.1"/>
    <property type="molecule type" value="mRNA"/>
</dbReference>
<dbReference type="EMBL" id="AK152972">
    <property type="protein sequence ID" value="BAE31629.1"/>
    <property type="molecule type" value="mRNA"/>
</dbReference>
<dbReference type="EMBL" id="AK159462">
    <property type="protein sequence ID" value="BAE35103.1"/>
    <property type="molecule type" value="mRNA"/>
</dbReference>
<dbReference type="CCDS" id="CCDS51604.1"/>
<dbReference type="RefSeq" id="NP_660129.2">
    <property type="nucleotide sequence ID" value="NM_145147.5"/>
</dbReference>
<dbReference type="SMR" id="Q3U6U5"/>
<dbReference type="BioGRID" id="223752">
    <property type="interactions" value="1"/>
</dbReference>
<dbReference type="FunCoup" id="Q3U6U5">
    <property type="interactions" value="278"/>
</dbReference>
<dbReference type="STRING" id="10090.ENSMUSP00000076458"/>
<dbReference type="iPTMnet" id="Q3U6U5"/>
<dbReference type="PhosphoSitePlus" id="Q3U6U5"/>
<dbReference type="PaxDb" id="10090-ENSMUSP00000076458"/>
<dbReference type="PeptideAtlas" id="Q3U6U5"/>
<dbReference type="ProteomicsDB" id="271184"/>
<dbReference type="Pumba" id="Q3U6U5"/>
<dbReference type="DNASU" id="107999"/>
<dbReference type="GeneID" id="107999"/>
<dbReference type="KEGG" id="mmu:107999"/>
<dbReference type="UCSC" id="uc008ypr.2">
    <property type="organism name" value="mouse"/>
</dbReference>
<dbReference type="AGR" id="MGI:1306825"/>
<dbReference type="CTD" id="8225"/>
<dbReference type="MGI" id="MGI:1306825">
    <property type="gene designation" value="Gtpbp6"/>
</dbReference>
<dbReference type="eggNOG" id="KOG0410">
    <property type="taxonomic scope" value="Eukaryota"/>
</dbReference>
<dbReference type="InParanoid" id="Q3U6U5"/>
<dbReference type="OrthoDB" id="10268034at2759"/>
<dbReference type="TreeFam" id="TF315022"/>
<dbReference type="BioGRID-ORCS" id="107999">
    <property type="hits" value="2 hits in 75 CRISPR screens"/>
</dbReference>
<dbReference type="ChiTaRS" id="Gtpbp6">
    <property type="organism name" value="mouse"/>
</dbReference>
<dbReference type="PRO" id="PR:Q3U6U5"/>
<dbReference type="Proteomes" id="UP000000589">
    <property type="component" value="Unplaced"/>
</dbReference>
<dbReference type="RNAct" id="Q3U6U5">
    <property type="molecule type" value="protein"/>
</dbReference>
<dbReference type="GO" id="GO:0005525">
    <property type="term" value="F:GTP binding"/>
    <property type="evidence" value="ECO:0007669"/>
    <property type="project" value="UniProtKB-KW"/>
</dbReference>
<dbReference type="GO" id="GO:0046872">
    <property type="term" value="F:metal ion binding"/>
    <property type="evidence" value="ECO:0007669"/>
    <property type="project" value="UniProtKB-KW"/>
</dbReference>
<dbReference type="CDD" id="cd01878">
    <property type="entry name" value="HflX"/>
    <property type="match status" value="1"/>
</dbReference>
<dbReference type="FunFam" id="3.40.50.11060:FF:000002">
    <property type="entry name" value="GTP binding protein 6 (putative)"/>
    <property type="match status" value="1"/>
</dbReference>
<dbReference type="FunFam" id="3.40.50.300:FF:000886">
    <property type="entry name" value="Putative GTP-binding protein 6"/>
    <property type="match status" value="1"/>
</dbReference>
<dbReference type="Gene3D" id="3.40.50.11060">
    <property type="entry name" value="GTPase HflX, N-terminal domain"/>
    <property type="match status" value="1"/>
</dbReference>
<dbReference type="Gene3D" id="3.40.50.300">
    <property type="entry name" value="P-loop containing nucleotide triphosphate hydrolases"/>
    <property type="match status" value="1"/>
</dbReference>
<dbReference type="InterPro" id="IPR030394">
    <property type="entry name" value="G_HFLX_dom"/>
</dbReference>
<dbReference type="InterPro" id="IPR006073">
    <property type="entry name" value="GTP-bd"/>
</dbReference>
<dbReference type="InterPro" id="IPR032305">
    <property type="entry name" value="GTP-bd_M"/>
</dbReference>
<dbReference type="InterPro" id="IPR016496">
    <property type="entry name" value="GTPase_HflX"/>
</dbReference>
<dbReference type="InterPro" id="IPR025121">
    <property type="entry name" value="GTPase_HflX_N"/>
</dbReference>
<dbReference type="InterPro" id="IPR042108">
    <property type="entry name" value="GTPase_HflX_N_sf"/>
</dbReference>
<dbReference type="InterPro" id="IPR027417">
    <property type="entry name" value="P-loop_NTPase"/>
</dbReference>
<dbReference type="NCBIfam" id="TIGR03156">
    <property type="entry name" value="GTP_HflX"/>
    <property type="match status" value="1"/>
</dbReference>
<dbReference type="PANTHER" id="PTHR10229:SF0">
    <property type="entry name" value="GTP-BINDING PROTEIN 6-RELATED"/>
    <property type="match status" value="1"/>
</dbReference>
<dbReference type="PANTHER" id="PTHR10229">
    <property type="entry name" value="GTP-BINDING PROTEIN HFLX"/>
    <property type="match status" value="1"/>
</dbReference>
<dbReference type="Pfam" id="PF16360">
    <property type="entry name" value="GTP-bdg_M"/>
    <property type="match status" value="1"/>
</dbReference>
<dbReference type="Pfam" id="PF13167">
    <property type="entry name" value="GTP-bdg_N"/>
    <property type="match status" value="1"/>
</dbReference>
<dbReference type="Pfam" id="PF01926">
    <property type="entry name" value="MMR_HSR1"/>
    <property type="match status" value="1"/>
</dbReference>
<dbReference type="SUPFAM" id="SSF52540">
    <property type="entry name" value="P-loop containing nucleoside triphosphate hydrolases"/>
    <property type="match status" value="1"/>
</dbReference>
<dbReference type="PROSITE" id="PS51705">
    <property type="entry name" value="G_HFLX"/>
    <property type="match status" value="1"/>
</dbReference>
<keyword id="KW-0342">GTP-binding</keyword>
<keyword id="KW-0460">Magnesium</keyword>
<keyword id="KW-0479">Metal-binding</keyword>
<keyword id="KW-0547">Nucleotide-binding</keyword>
<keyword id="KW-1185">Reference proteome</keyword>
<proteinExistence type="evidence at protein level"/>
<organism>
    <name type="scientific">Mus musculus</name>
    <name type="common">Mouse</name>
    <dbReference type="NCBI Taxonomy" id="10090"/>
    <lineage>
        <taxon>Eukaryota</taxon>
        <taxon>Metazoa</taxon>
        <taxon>Chordata</taxon>
        <taxon>Craniata</taxon>
        <taxon>Vertebrata</taxon>
        <taxon>Euteleostomi</taxon>
        <taxon>Mammalia</taxon>
        <taxon>Eutheria</taxon>
        <taxon>Euarchontoglires</taxon>
        <taxon>Glires</taxon>
        <taxon>Rodentia</taxon>
        <taxon>Myomorpha</taxon>
        <taxon>Muroidea</taxon>
        <taxon>Muridae</taxon>
        <taxon>Murinae</taxon>
        <taxon>Mus</taxon>
        <taxon>Mus</taxon>
    </lineage>
</organism>
<evidence type="ECO:0000255" key="1">
    <source>
        <dbReference type="PROSITE-ProRule" id="PRU01042"/>
    </source>
</evidence>
<evidence type="ECO:0000256" key="2">
    <source>
        <dbReference type="SAM" id="MobiDB-lite"/>
    </source>
</evidence>
<evidence type="ECO:0000305" key="3"/>
<name>GTPB6_MOUSE</name>
<accession>Q3U6U5</accession>
<accession>Q3TX13</accession>
<accession>Q3UMM2</accession>
<protein>
    <recommendedName>
        <fullName>Putative GTP-binding protein 6</fullName>
    </recommendedName>
</protein>